<keyword id="KW-0030">Aminoacyl-tRNA synthetase</keyword>
<keyword id="KW-0067">ATP-binding</keyword>
<keyword id="KW-0963">Cytoplasm</keyword>
<keyword id="KW-0436">Ligase</keyword>
<keyword id="KW-0460">Magnesium</keyword>
<keyword id="KW-0479">Metal-binding</keyword>
<keyword id="KW-0547">Nucleotide-binding</keyword>
<keyword id="KW-0648">Protein biosynthesis</keyword>
<feature type="chain" id="PRO_1000199330" description="Phenylalanine--tRNA ligase alpha subunit">
    <location>
        <begin position="1"/>
        <end position="325"/>
    </location>
</feature>
<feature type="binding site" evidence="1">
    <location>
        <position position="251"/>
    </location>
    <ligand>
        <name>Mg(2+)</name>
        <dbReference type="ChEBI" id="CHEBI:18420"/>
        <note>shared with beta subunit</note>
    </ligand>
</feature>
<accession>B9KAE8</accession>
<sequence length="325" mass="38068">MDVETVEKEAIEKLEKVSNAQELEQFRVEFLGKKGKITSLMKNLKNLPPEERPAYGKRVNELREKVERLFSEKKKQIEELLERERMEKMRVDVTLPGARRKVGHSHPVLKVMEEIERIFVSMGFDVVEGPEIETTWHNFDALNTPEWHPARDEHDSFYITDELLLRTHTSPVQIRTMLERKPPIAIISPGKVYRRDYDATHLPMFHQVEGLHVDRDLSVAHLKFTLEEFARRMFGKNARIRLRPSYFPFTEPSFEVDVYLSGYGWLEILGAGMVDPNVFLNVGYDPEEWTGYAFGMGVERISMLKYGITDIREFVRNDVRFLSSY</sequence>
<reference key="1">
    <citation type="submission" date="2007-11" db="EMBL/GenBank/DDBJ databases">
        <title>The genome sequence of the hyperthermophilic bacterium Thermotoga neapolitana.</title>
        <authorList>
            <person name="Lim S.K."/>
            <person name="Kim J.S."/>
            <person name="Cha S.H."/>
            <person name="Park B.C."/>
            <person name="Lee D.S."/>
            <person name="Tae H.S."/>
            <person name="Kim S.-J."/>
            <person name="Kim J.J."/>
            <person name="Park K.J."/>
            <person name="Lee S.Y."/>
        </authorList>
    </citation>
    <scope>NUCLEOTIDE SEQUENCE [LARGE SCALE GENOMIC DNA]</scope>
    <source>
        <strain>ATCC 49049 / DSM 4359 / NBRC 107923 / NS-E</strain>
    </source>
</reference>
<proteinExistence type="inferred from homology"/>
<organism>
    <name type="scientific">Thermotoga neapolitana (strain ATCC 49049 / DSM 4359 / NBRC 107923 / NS-E)</name>
    <dbReference type="NCBI Taxonomy" id="309803"/>
    <lineage>
        <taxon>Bacteria</taxon>
        <taxon>Thermotogati</taxon>
        <taxon>Thermotogota</taxon>
        <taxon>Thermotogae</taxon>
        <taxon>Thermotogales</taxon>
        <taxon>Thermotogaceae</taxon>
        <taxon>Thermotoga</taxon>
    </lineage>
</organism>
<name>SYFA_THENN</name>
<gene>
    <name evidence="1" type="primary">pheS</name>
    <name type="ordered locus">CTN_1755</name>
</gene>
<dbReference type="EC" id="6.1.1.20" evidence="1"/>
<dbReference type="EMBL" id="CP000916">
    <property type="protein sequence ID" value="ACM23931.1"/>
    <property type="molecule type" value="Genomic_DNA"/>
</dbReference>
<dbReference type="RefSeq" id="WP_015920169.1">
    <property type="nucleotide sequence ID" value="NC_011978.1"/>
</dbReference>
<dbReference type="SMR" id="B9KAE8"/>
<dbReference type="STRING" id="309803.CTN_1755"/>
<dbReference type="KEGG" id="tna:CTN_1755"/>
<dbReference type="eggNOG" id="COG0016">
    <property type="taxonomic scope" value="Bacteria"/>
</dbReference>
<dbReference type="HOGENOM" id="CLU_025086_0_1_0"/>
<dbReference type="Proteomes" id="UP000000445">
    <property type="component" value="Chromosome"/>
</dbReference>
<dbReference type="GO" id="GO:0005737">
    <property type="term" value="C:cytoplasm"/>
    <property type="evidence" value="ECO:0007669"/>
    <property type="project" value="UniProtKB-SubCell"/>
</dbReference>
<dbReference type="GO" id="GO:0005524">
    <property type="term" value="F:ATP binding"/>
    <property type="evidence" value="ECO:0007669"/>
    <property type="project" value="UniProtKB-UniRule"/>
</dbReference>
<dbReference type="GO" id="GO:0000287">
    <property type="term" value="F:magnesium ion binding"/>
    <property type="evidence" value="ECO:0007669"/>
    <property type="project" value="UniProtKB-UniRule"/>
</dbReference>
<dbReference type="GO" id="GO:0004826">
    <property type="term" value="F:phenylalanine-tRNA ligase activity"/>
    <property type="evidence" value="ECO:0007669"/>
    <property type="project" value="UniProtKB-UniRule"/>
</dbReference>
<dbReference type="GO" id="GO:0000049">
    <property type="term" value="F:tRNA binding"/>
    <property type="evidence" value="ECO:0007669"/>
    <property type="project" value="InterPro"/>
</dbReference>
<dbReference type="GO" id="GO:0006432">
    <property type="term" value="P:phenylalanyl-tRNA aminoacylation"/>
    <property type="evidence" value="ECO:0007669"/>
    <property type="project" value="UniProtKB-UniRule"/>
</dbReference>
<dbReference type="CDD" id="cd00496">
    <property type="entry name" value="PheRS_alpha_core"/>
    <property type="match status" value="1"/>
</dbReference>
<dbReference type="FunFam" id="3.30.930.10:FF:000003">
    <property type="entry name" value="Phenylalanine--tRNA ligase alpha subunit"/>
    <property type="match status" value="1"/>
</dbReference>
<dbReference type="Gene3D" id="3.30.930.10">
    <property type="entry name" value="Bira Bifunctional Protein, Domain 2"/>
    <property type="match status" value="1"/>
</dbReference>
<dbReference type="HAMAP" id="MF_00281">
    <property type="entry name" value="Phe_tRNA_synth_alpha1"/>
    <property type="match status" value="1"/>
</dbReference>
<dbReference type="InterPro" id="IPR006195">
    <property type="entry name" value="aa-tRNA-synth_II"/>
</dbReference>
<dbReference type="InterPro" id="IPR045864">
    <property type="entry name" value="aa-tRNA-synth_II/BPL/LPL"/>
</dbReference>
<dbReference type="InterPro" id="IPR004529">
    <property type="entry name" value="Phe-tRNA-synth_IIc_asu"/>
</dbReference>
<dbReference type="InterPro" id="IPR004188">
    <property type="entry name" value="Phe-tRNA_ligase_II_N"/>
</dbReference>
<dbReference type="InterPro" id="IPR022911">
    <property type="entry name" value="Phe_tRNA_ligase_alpha1_bac"/>
</dbReference>
<dbReference type="InterPro" id="IPR002319">
    <property type="entry name" value="Phenylalanyl-tRNA_Synthase"/>
</dbReference>
<dbReference type="InterPro" id="IPR010978">
    <property type="entry name" value="tRNA-bd_arm"/>
</dbReference>
<dbReference type="NCBIfam" id="TIGR00468">
    <property type="entry name" value="pheS"/>
    <property type="match status" value="1"/>
</dbReference>
<dbReference type="PANTHER" id="PTHR11538:SF41">
    <property type="entry name" value="PHENYLALANINE--TRNA LIGASE, MITOCHONDRIAL"/>
    <property type="match status" value="1"/>
</dbReference>
<dbReference type="PANTHER" id="PTHR11538">
    <property type="entry name" value="PHENYLALANYL-TRNA SYNTHETASE"/>
    <property type="match status" value="1"/>
</dbReference>
<dbReference type="Pfam" id="PF02912">
    <property type="entry name" value="Phe_tRNA-synt_N"/>
    <property type="match status" value="1"/>
</dbReference>
<dbReference type="Pfam" id="PF01409">
    <property type="entry name" value="tRNA-synt_2d"/>
    <property type="match status" value="1"/>
</dbReference>
<dbReference type="SUPFAM" id="SSF55681">
    <property type="entry name" value="Class II aaRS and biotin synthetases"/>
    <property type="match status" value="1"/>
</dbReference>
<dbReference type="SUPFAM" id="SSF46589">
    <property type="entry name" value="tRNA-binding arm"/>
    <property type="match status" value="1"/>
</dbReference>
<dbReference type="PROSITE" id="PS50862">
    <property type="entry name" value="AA_TRNA_LIGASE_II"/>
    <property type="match status" value="1"/>
</dbReference>
<evidence type="ECO:0000255" key="1">
    <source>
        <dbReference type="HAMAP-Rule" id="MF_00281"/>
    </source>
</evidence>
<comment type="catalytic activity">
    <reaction evidence="1">
        <text>tRNA(Phe) + L-phenylalanine + ATP = L-phenylalanyl-tRNA(Phe) + AMP + diphosphate + H(+)</text>
        <dbReference type="Rhea" id="RHEA:19413"/>
        <dbReference type="Rhea" id="RHEA-COMP:9668"/>
        <dbReference type="Rhea" id="RHEA-COMP:9699"/>
        <dbReference type="ChEBI" id="CHEBI:15378"/>
        <dbReference type="ChEBI" id="CHEBI:30616"/>
        <dbReference type="ChEBI" id="CHEBI:33019"/>
        <dbReference type="ChEBI" id="CHEBI:58095"/>
        <dbReference type="ChEBI" id="CHEBI:78442"/>
        <dbReference type="ChEBI" id="CHEBI:78531"/>
        <dbReference type="ChEBI" id="CHEBI:456215"/>
        <dbReference type="EC" id="6.1.1.20"/>
    </reaction>
</comment>
<comment type="cofactor">
    <cofactor evidence="1">
        <name>Mg(2+)</name>
        <dbReference type="ChEBI" id="CHEBI:18420"/>
    </cofactor>
    <text evidence="1">Binds 2 magnesium ions per tetramer.</text>
</comment>
<comment type="subunit">
    <text evidence="1">Tetramer of two alpha and two beta subunits.</text>
</comment>
<comment type="subcellular location">
    <subcellularLocation>
        <location evidence="1">Cytoplasm</location>
    </subcellularLocation>
</comment>
<comment type="similarity">
    <text evidence="1">Belongs to the class-II aminoacyl-tRNA synthetase family. Phe-tRNA synthetase alpha subunit type 1 subfamily.</text>
</comment>
<protein>
    <recommendedName>
        <fullName evidence="1">Phenylalanine--tRNA ligase alpha subunit</fullName>
        <ecNumber evidence="1">6.1.1.20</ecNumber>
    </recommendedName>
    <alternativeName>
        <fullName evidence="1">Phenylalanyl-tRNA synthetase alpha subunit</fullName>
        <shortName evidence="1">PheRS</shortName>
    </alternativeName>
</protein>